<name>UBP37_BOVIN</name>
<organism>
    <name type="scientific">Bos taurus</name>
    <name type="common">Bovine</name>
    <dbReference type="NCBI Taxonomy" id="9913"/>
    <lineage>
        <taxon>Eukaryota</taxon>
        <taxon>Metazoa</taxon>
        <taxon>Chordata</taxon>
        <taxon>Craniata</taxon>
        <taxon>Vertebrata</taxon>
        <taxon>Euteleostomi</taxon>
        <taxon>Mammalia</taxon>
        <taxon>Eutheria</taxon>
        <taxon>Laurasiatheria</taxon>
        <taxon>Artiodactyla</taxon>
        <taxon>Ruminantia</taxon>
        <taxon>Pecora</taxon>
        <taxon>Bovidae</taxon>
        <taxon>Bovinae</taxon>
        <taxon>Bos</taxon>
    </lineage>
</organism>
<evidence type="ECO:0000250" key="1"/>
<evidence type="ECO:0000250" key="2">
    <source>
        <dbReference type="UniProtKB" id="Q86T82"/>
    </source>
</evidence>
<evidence type="ECO:0000255" key="3">
    <source>
        <dbReference type="PROSITE-ProRule" id="PRU00213"/>
    </source>
</evidence>
<evidence type="ECO:0000255" key="4">
    <source>
        <dbReference type="PROSITE-ProRule" id="PRU10092"/>
    </source>
</evidence>
<evidence type="ECO:0000255" key="5">
    <source>
        <dbReference type="PROSITE-ProRule" id="PRU10093"/>
    </source>
</evidence>
<evidence type="ECO:0000256" key="6">
    <source>
        <dbReference type="SAM" id="MobiDB-lite"/>
    </source>
</evidence>
<evidence type="ECO:0000305" key="7"/>
<sequence length="981" mass="110398">MSPLKIHGPIRIRSMQTGITKWKEGSFEVVEKENKVSLVVHYNTGGIPRIFQLSHNIKNVVLRPSGAKQSRLMLTLQDNSFLSIDKVPSKDAEEMRLFLDAVHQNRLNAAMKPSQGSGSFGAILGSRTSQKETNRQLSYSDNQVSSKRGSLETKDDTPFRKVLGNPSRGSIKAAAGNGVTPARTIPSLTSTSTPLRSGLLENRTEKRKRMLSSGSELNEDYPKENDSSSNNKAMTDPSRKYLTSSREKQLSLKQSEENRTSGLLPLQSSSFYGSRTAAKDYSPGSTNLDRTNISSQTPSAKRSLGFLPQPAPLSVKKLRCNQDYTGWNKPRVPLSSHQQQQLQGFSNLGNTCYMNAILQSLFSLQSFANDLLKQGIPWKKIPLNALIRRFAHLLVKKDICNSETKKDLLKKVKNAISATAERFSGYMQNDAHEFLSQCLDQLKEDMEKLNKTWKIEPVPGEENSPDISATRVYTCPVITNLEFEVQHSIICKVCGEIIPKREQFNDLSIDLPRRKKPLPPRSIQDSLDLFFRAEELEYSCEKCGGKCALVRHKFNRLPRILILHLKRYSFNVALSLNNKIGQQVIIPRYLTLSSHCTENTKPPFNLGWSAQMAVSRPLKASQMVNSCITSPSTPSKNFTFKSKTSLALSLDSDSEDELKRSVALSHRLCEMSGSEQQQEDLEKDSKSCRIEPDKSELENSGFDGMSEEELLAAVLEISKREASPSLSHEDDDKPTSSPDTGFAEDDIQEMPENPDSVETEKPKTITEPDPASFTEITKDCDENKENKTPEGSQGEVDWLQQYDMEREREEQELQQALAQSLQEQEAWEQKEDDDLKRATELSLQEFNNSFVDSLGSDEDSGNEDVLDMEYTEAEAEELKRNAETGNLPHSYRLISVVSHIGSTSSSGHYISDVYDIKKQAWFTYNDLEVSKIQEASVQSDRDRSGYIFFYMHKEIFDELLETEKNSQALNLEVGKTTRQVS</sequence>
<feature type="chain" id="PRO_0000412644" description="Ubiquitin carboxyl-terminal hydrolase 37">
    <location>
        <begin position="1"/>
        <end position="981"/>
    </location>
</feature>
<feature type="domain" description="USP">
    <location>
        <begin position="343"/>
        <end position="953"/>
    </location>
</feature>
<feature type="domain" description="UIM 1" evidence="3">
    <location>
        <begin position="706"/>
        <end position="725"/>
    </location>
</feature>
<feature type="domain" description="UIM 2" evidence="3">
    <location>
        <begin position="808"/>
        <end position="827"/>
    </location>
</feature>
<feature type="domain" description="UIM 3" evidence="3">
    <location>
        <begin position="830"/>
        <end position="849"/>
    </location>
</feature>
<feature type="region of interest" description="Disordered" evidence="6">
    <location>
        <begin position="111"/>
        <end position="306"/>
    </location>
</feature>
<feature type="region of interest" description="Disordered" evidence="6">
    <location>
        <begin position="670"/>
        <end position="705"/>
    </location>
</feature>
<feature type="region of interest" description="Disordered" evidence="6">
    <location>
        <begin position="721"/>
        <end position="797"/>
    </location>
</feature>
<feature type="short sequence motif" description="KEN box 1" evidence="1">
    <location>
        <begin position="32"/>
        <end position="34"/>
    </location>
</feature>
<feature type="short sequence motif" description="D-box 1" evidence="1">
    <location>
        <begin position="71"/>
        <end position="79"/>
    </location>
</feature>
<feature type="short sequence motif" description="D-box 2" evidence="1">
    <location>
        <begin position="96"/>
        <end position="105"/>
    </location>
</feature>
<feature type="short sequence motif" description="D-box 3" evidence="1">
    <location>
        <begin position="160"/>
        <end position="168"/>
    </location>
</feature>
<feature type="short sequence motif" description="KEN box 2" evidence="1">
    <location>
        <begin position="223"/>
        <end position="225"/>
    </location>
</feature>
<feature type="short sequence motif" description="KEN box 3" evidence="1">
    <location>
        <begin position="784"/>
        <end position="786"/>
    </location>
</feature>
<feature type="compositionally biased region" description="Polar residues" evidence="6">
    <location>
        <begin position="135"/>
        <end position="148"/>
    </location>
</feature>
<feature type="compositionally biased region" description="Basic and acidic residues" evidence="6">
    <location>
        <begin position="149"/>
        <end position="159"/>
    </location>
</feature>
<feature type="compositionally biased region" description="Low complexity" evidence="6">
    <location>
        <begin position="183"/>
        <end position="200"/>
    </location>
</feature>
<feature type="compositionally biased region" description="Basic and acidic residues" evidence="6">
    <location>
        <begin position="245"/>
        <end position="259"/>
    </location>
</feature>
<feature type="compositionally biased region" description="Polar residues" evidence="6">
    <location>
        <begin position="283"/>
        <end position="300"/>
    </location>
</feature>
<feature type="compositionally biased region" description="Basic and acidic residues" evidence="6">
    <location>
        <begin position="683"/>
        <end position="697"/>
    </location>
</feature>
<feature type="compositionally biased region" description="Basic and acidic residues" evidence="6">
    <location>
        <begin position="721"/>
        <end position="734"/>
    </location>
</feature>
<feature type="compositionally biased region" description="Basic and acidic residues" evidence="6">
    <location>
        <begin position="776"/>
        <end position="788"/>
    </location>
</feature>
<feature type="active site" description="Nucleophile" evidence="2 4 5">
    <location>
        <position position="352"/>
    </location>
</feature>
<feature type="active site" description="Proton acceptor" evidence="4 5">
    <location>
        <position position="908"/>
    </location>
</feature>
<feature type="modified residue" description="Phosphoserine" evidence="2">
    <location>
        <position position="114"/>
    </location>
</feature>
<feature type="modified residue" description="Phosphoserine" evidence="2">
    <location>
        <position position="170"/>
    </location>
</feature>
<feature type="modified residue" description="Phosphoserine" evidence="2">
    <location>
        <position position="212"/>
    </location>
</feature>
<feature type="modified residue" description="Phosphoserine; by CDK2" evidence="2">
    <location>
        <position position="630"/>
    </location>
</feature>
<feature type="modified residue" description="Phosphoserine" evidence="2">
    <location>
        <position position="652"/>
    </location>
</feature>
<feature type="modified residue" description="Phosphoserine" evidence="2">
    <location>
        <position position="654"/>
    </location>
</feature>
<feature type="modified residue" description="Phosphoserine" evidence="2">
    <location>
        <position position="772"/>
    </location>
</feature>
<gene>
    <name type="primary">USP37</name>
</gene>
<dbReference type="EC" id="3.4.19.12" evidence="2"/>
<dbReference type="EMBL" id="AAFC03077731">
    <property type="status" value="NOT_ANNOTATED_CDS"/>
    <property type="molecule type" value="Genomic_DNA"/>
</dbReference>
<dbReference type="EMBL" id="AAFC03103854">
    <property type="status" value="NOT_ANNOTATED_CDS"/>
    <property type="molecule type" value="Genomic_DNA"/>
</dbReference>
<dbReference type="EMBL" id="AAFC03103857">
    <property type="status" value="NOT_ANNOTATED_CDS"/>
    <property type="molecule type" value="Genomic_DNA"/>
</dbReference>
<dbReference type="RefSeq" id="NP_001258921.1">
    <property type="nucleotide sequence ID" value="NM_001271992.1"/>
</dbReference>
<dbReference type="RefSeq" id="XP_010800620.1">
    <property type="nucleotide sequence ID" value="XM_010802318.4"/>
</dbReference>
<dbReference type="RefSeq" id="XP_010800621.1">
    <property type="nucleotide sequence ID" value="XM_010802319.4"/>
</dbReference>
<dbReference type="RefSeq" id="XP_010800622.1">
    <property type="nucleotide sequence ID" value="XM_010802320.4"/>
</dbReference>
<dbReference type="RefSeq" id="XP_024855181.1">
    <property type="nucleotide sequence ID" value="XM_024999413.2"/>
</dbReference>
<dbReference type="RefSeq" id="XP_024855184.1">
    <property type="nucleotide sequence ID" value="XM_024999416.2"/>
</dbReference>
<dbReference type="SMR" id="F1N5V1"/>
<dbReference type="FunCoup" id="F1N5V1">
    <property type="interactions" value="3281"/>
</dbReference>
<dbReference type="IntAct" id="F1N5V1">
    <property type="interactions" value="1"/>
</dbReference>
<dbReference type="STRING" id="9913.ENSBTAP00000057573"/>
<dbReference type="PaxDb" id="9913-ENSBTAP00000038058"/>
<dbReference type="Ensembl" id="ENSBTAT00000081874.2">
    <property type="protein sequence ID" value="ENSBTAP00000057573.1"/>
    <property type="gene ID" value="ENSBTAG00000016572.6"/>
</dbReference>
<dbReference type="GeneID" id="407168"/>
<dbReference type="KEGG" id="bta:407168"/>
<dbReference type="CTD" id="57695"/>
<dbReference type="VEuPathDB" id="HostDB:ENSBTAG00000016572"/>
<dbReference type="VGNC" id="VGNC:36726">
    <property type="gene designation" value="USP37"/>
</dbReference>
<dbReference type="eggNOG" id="KOG1868">
    <property type="taxonomic scope" value="Eukaryota"/>
</dbReference>
<dbReference type="GeneTree" id="ENSGT00940000158091"/>
<dbReference type="HOGENOM" id="CLU_012557_0_0_1"/>
<dbReference type="InParanoid" id="F1N5V1"/>
<dbReference type="OMA" id="CGEVVNK"/>
<dbReference type="OrthoDB" id="289038at2759"/>
<dbReference type="TreeFam" id="TF323032"/>
<dbReference type="Reactome" id="R-BTA-5689880">
    <property type="pathway name" value="Ub-specific processing proteases"/>
</dbReference>
<dbReference type="Proteomes" id="UP000009136">
    <property type="component" value="Chromosome 2"/>
</dbReference>
<dbReference type="Bgee" id="ENSBTAG00000016572">
    <property type="expression patterns" value="Expressed in semen and 110 other cell types or tissues"/>
</dbReference>
<dbReference type="GO" id="GO:0005694">
    <property type="term" value="C:chromosome"/>
    <property type="evidence" value="ECO:0007669"/>
    <property type="project" value="UniProtKB-SubCell"/>
</dbReference>
<dbReference type="GO" id="GO:0005829">
    <property type="term" value="C:cytosol"/>
    <property type="evidence" value="ECO:0000318"/>
    <property type="project" value="GO_Central"/>
</dbReference>
<dbReference type="GO" id="GO:0005634">
    <property type="term" value="C:nucleus"/>
    <property type="evidence" value="ECO:0000318"/>
    <property type="project" value="GO_Central"/>
</dbReference>
<dbReference type="GO" id="GO:0004843">
    <property type="term" value="F:cysteine-type deubiquitinase activity"/>
    <property type="evidence" value="ECO:0000250"/>
    <property type="project" value="UniProtKB"/>
</dbReference>
<dbReference type="GO" id="GO:0004197">
    <property type="term" value="F:cysteine-type endopeptidase activity"/>
    <property type="evidence" value="ECO:0000250"/>
    <property type="project" value="UniProtKB"/>
</dbReference>
<dbReference type="GO" id="GO:0019901">
    <property type="term" value="F:protein kinase binding"/>
    <property type="evidence" value="ECO:0007669"/>
    <property type="project" value="Ensembl"/>
</dbReference>
<dbReference type="GO" id="GO:0051301">
    <property type="term" value="P:cell division"/>
    <property type="evidence" value="ECO:0007669"/>
    <property type="project" value="UniProtKB-KW"/>
</dbReference>
<dbReference type="GO" id="GO:0000082">
    <property type="term" value="P:G1/S transition of mitotic cell cycle"/>
    <property type="evidence" value="ECO:0000250"/>
    <property type="project" value="UniProtKB"/>
</dbReference>
<dbReference type="GO" id="GO:0016579">
    <property type="term" value="P:protein deubiquitination"/>
    <property type="evidence" value="ECO:0000250"/>
    <property type="project" value="UniProtKB"/>
</dbReference>
<dbReference type="GO" id="GO:0035871">
    <property type="term" value="P:protein K11-linked deubiquitination"/>
    <property type="evidence" value="ECO:0000250"/>
    <property type="project" value="UniProtKB"/>
</dbReference>
<dbReference type="GO" id="GO:0071108">
    <property type="term" value="P:protein K48-linked deubiquitination"/>
    <property type="evidence" value="ECO:0000250"/>
    <property type="project" value="UniProtKB"/>
</dbReference>
<dbReference type="GO" id="GO:0006508">
    <property type="term" value="P:proteolysis"/>
    <property type="evidence" value="ECO:0007669"/>
    <property type="project" value="UniProtKB-KW"/>
</dbReference>
<dbReference type="GO" id="GO:0006275">
    <property type="term" value="P:regulation of DNA replication"/>
    <property type="evidence" value="ECO:0000250"/>
    <property type="project" value="UniProtKB"/>
</dbReference>
<dbReference type="GO" id="GO:0031647">
    <property type="term" value="P:regulation of protein stability"/>
    <property type="evidence" value="ECO:0000318"/>
    <property type="project" value="GO_Central"/>
</dbReference>
<dbReference type="CDD" id="cd02257">
    <property type="entry name" value="Peptidase_C19"/>
    <property type="match status" value="2"/>
</dbReference>
<dbReference type="CDD" id="cd13312">
    <property type="entry name" value="PH_USP37_like"/>
    <property type="match status" value="1"/>
</dbReference>
<dbReference type="FunFam" id="2.30.29.180:FF:000001">
    <property type="entry name" value="Ubiquitin carboxyl-terminal hydrolase 37"/>
    <property type="match status" value="1"/>
</dbReference>
<dbReference type="FunFam" id="3.90.70.10:FF:000040">
    <property type="entry name" value="Ubiquitin carboxyl-terminal hydrolase 37"/>
    <property type="match status" value="1"/>
</dbReference>
<dbReference type="FunFam" id="3.90.70.10:FF:000287">
    <property type="entry name" value="Ubiquitin specific peptidase 37"/>
    <property type="match status" value="1"/>
</dbReference>
<dbReference type="Gene3D" id="3.90.70.10">
    <property type="entry name" value="Cysteine proteinases"/>
    <property type="match status" value="2"/>
</dbReference>
<dbReference type="Gene3D" id="2.30.29.180">
    <property type="entry name" value="Ubiquitin carboxyl-terminal hydrolase 26/29/37, pleckstrin homology-like domain"/>
    <property type="match status" value="1"/>
</dbReference>
<dbReference type="InterPro" id="IPR038765">
    <property type="entry name" value="Papain-like_cys_pep_sf"/>
</dbReference>
<dbReference type="InterPro" id="IPR050164">
    <property type="entry name" value="Peptidase_C19"/>
</dbReference>
<dbReference type="InterPro" id="IPR001394">
    <property type="entry name" value="Peptidase_C19_UCH"/>
</dbReference>
<dbReference type="InterPro" id="IPR003903">
    <property type="entry name" value="UIM_dom"/>
</dbReference>
<dbReference type="InterPro" id="IPR032069">
    <property type="entry name" value="USP37-like_PH"/>
</dbReference>
<dbReference type="InterPro" id="IPR038093">
    <property type="entry name" value="USP37-like_PH_sf"/>
</dbReference>
<dbReference type="InterPro" id="IPR018200">
    <property type="entry name" value="USP_CS"/>
</dbReference>
<dbReference type="InterPro" id="IPR028889">
    <property type="entry name" value="USP_dom"/>
</dbReference>
<dbReference type="PANTHER" id="PTHR24006">
    <property type="entry name" value="UBIQUITIN CARBOXYL-TERMINAL HYDROLASE"/>
    <property type="match status" value="1"/>
</dbReference>
<dbReference type="PANTHER" id="PTHR24006:SF686">
    <property type="entry name" value="UBIQUITIN CARBOXYL-TERMINAL HYDROLASE 37"/>
    <property type="match status" value="1"/>
</dbReference>
<dbReference type="Pfam" id="PF00443">
    <property type="entry name" value="UCH"/>
    <property type="match status" value="1"/>
</dbReference>
<dbReference type="Pfam" id="PF16674">
    <property type="entry name" value="UCH_N"/>
    <property type="match status" value="1"/>
</dbReference>
<dbReference type="Pfam" id="PF02809">
    <property type="entry name" value="UIM"/>
    <property type="match status" value="3"/>
</dbReference>
<dbReference type="SMART" id="SM00726">
    <property type="entry name" value="UIM"/>
    <property type="match status" value="4"/>
</dbReference>
<dbReference type="SUPFAM" id="SSF54001">
    <property type="entry name" value="Cysteine proteinases"/>
    <property type="match status" value="1"/>
</dbReference>
<dbReference type="PROSITE" id="PS50330">
    <property type="entry name" value="UIM"/>
    <property type="match status" value="3"/>
</dbReference>
<dbReference type="PROSITE" id="PS00972">
    <property type="entry name" value="USP_1"/>
    <property type="match status" value="1"/>
</dbReference>
<dbReference type="PROSITE" id="PS00973">
    <property type="entry name" value="USP_2"/>
    <property type="match status" value="1"/>
</dbReference>
<dbReference type="PROSITE" id="PS50235">
    <property type="entry name" value="USP_3"/>
    <property type="match status" value="1"/>
</dbReference>
<accession>F1N5V1</accession>
<reference key="1">
    <citation type="journal article" date="2009" name="Science">
        <title>The genome sequence of taurine cattle: a window to ruminant biology and evolution.</title>
        <authorList>
            <consortium name="The bovine genome sequencing and analysis consortium"/>
        </authorList>
    </citation>
    <scope>NUCLEOTIDE SEQUENCE [LARGE SCALE GENOMIC DNA]</scope>
</reference>
<protein>
    <recommendedName>
        <fullName>Ubiquitin carboxyl-terminal hydrolase 37</fullName>
        <ecNumber evidence="2">3.4.19.12</ecNumber>
    </recommendedName>
    <alternativeName>
        <fullName>Deubiquitinating enzyme 37</fullName>
    </alternativeName>
    <alternativeName>
        <fullName>Ubiquitin thioesterase 37</fullName>
    </alternativeName>
    <alternativeName>
        <fullName>Ubiquitin-specific-processing protease 37</fullName>
    </alternativeName>
</protein>
<keyword id="KW-0131">Cell cycle</keyword>
<keyword id="KW-0132">Cell division</keyword>
<keyword id="KW-0158">Chromosome</keyword>
<keyword id="KW-0378">Hydrolase</keyword>
<keyword id="KW-0498">Mitosis</keyword>
<keyword id="KW-0539">Nucleus</keyword>
<keyword id="KW-0597">Phosphoprotein</keyword>
<keyword id="KW-0645">Protease</keyword>
<keyword id="KW-1185">Reference proteome</keyword>
<keyword id="KW-0677">Repeat</keyword>
<keyword id="KW-0788">Thiol protease</keyword>
<keyword id="KW-0832">Ubl conjugation</keyword>
<keyword id="KW-0833">Ubl conjugation pathway</keyword>
<comment type="function">
    <text evidence="2">Deubiquitinase that plays a role in different processes including cell cycle regulation, DNA replication or DNA damage response. Antagonizes the anaphase-promoting complex (APC/C) during G1/S transition by mediating deubiquitination of cyclin-A (CCNA1 and CCNA2), thereby promoting S phase entry. Specifically mediates deubiquitination of 'Lys-11'-linked polyubiquitin chains, a specific ubiquitin-linkage type mediated by the APC/C complex. Phosphorylation at Ser-628 during G1/S phase maximizes the deubiquitinase activity, leading to prevent degradation of cyclin-A (CCNA1 and CCNA2). Plays an important role in the regulation of DNA replication by stabilizing the licensing factor CDT1. Also plays an essential role beyond S-phase entry to promote the efficiency and fidelity of replication by deubiquitinating checkpoint kinase 1/CHK1, promoting its stability. Sustains the DNA damage response (DDR) by deubiquitinating and stabilizing the ATP-dependent DNA helicase BLM. Mechanistically, DNA double-strand breaks (DSB) promotes ATM-mediated phosphorylation of USP37 and enhances the binding between USP37 and BLM. Promotes cell migration by deubiquitinating and stabilizing the epithelial-mesenchymal transition (EMT)-inducing transcription factor SNAI. Plays a role in the regulation of mitotic spindle assembly and mitotic progression by associating with chromatin-associated WAPL and stabilizing it through deubiquitination.</text>
</comment>
<comment type="catalytic activity">
    <reaction evidence="2">
        <text>Thiol-dependent hydrolysis of ester, thioester, amide, peptide and isopeptide bonds formed by the C-terminal Gly of ubiquitin (a 76-residue protein attached to proteins as an intracellular targeting signal).</text>
        <dbReference type="EC" id="3.4.19.12"/>
    </reaction>
</comment>
<comment type="subunit">
    <text evidence="2">Interacts with FZR1/CDH1. Interacts with CDT1.</text>
</comment>
<comment type="subcellular location">
    <subcellularLocation>
        <location evidence="2">Nucleus</location>
    </subcellularLocation>
    <subcellularLocation>
        <location evidence="2">Chromosome</location>
    </subcellularLocation>
</comment>
<comment type="domain">
    <text evidence="2">The KEN box 3 is required for interaction with FZR1/CDH1 and is essential for APC(CDH1)-mediated ubiquitination.</text>
</comment>
<comment type="PTM">
    <text evidence="2">Polyubiquitinated via 'Lys-11'-linked ubiquitin by the APC(CDH1) complex during late mitosis, leading to its degradation. Able to mediate auto-deubiquitination.</text>
</comment>
<comment type="PTM">
    <text evidence="2">Phosphorylated at Ser-630 by CDK2 during G1/S phase but not during mitosis; phosphorylation at Ser-630 is required for deubiquitinase activity. Also polyubiquitinated during early G1 phase, without leading to degradation. Phosphorylated at Ser-114 by ATM following DNA damage, which in turn increases its deubiquitination activity towards BLM.</text>
</comment>
<comment type="similarity">
    <text evidence="7">Belongs to the peptidase C19 family.</text>
</comment>
<proteinExistence type="inferred from homology"/>